<evidence type="ECO:0000255" key="1">
    <source>
        <dbReference type="HAMAP-Rule" id="MF_00391"/>
    </source>
</evidence>
<evidence type="ECO:0000256" key="2">
    <source>
        <dbReference type="SAM" id="MobiDB-lite"/>
    </source>
</evidence>
<evidence type="ECO:0000305" key="3"/>
<name>RL34_LEPIC</name>
<comment type="similarity">
    <text evidence="1">Belongs to the bacterial ribosomal protein bL34 family.</text>
</comment>
<protein>
    <recommendedName>
        <fullName evidence="1">Large ribosomal subunit protein bL34</fullName>
    </recommendedName>
    <alternativeName>
        <fullName evidence="3">50S ribosomal protein L34</fullName>
    </alternativeName>
</protein>
<dbReference type="EMBL" id="AE016823">
    <property type="protein sequence ID" value="AAS68784.1"/>
    <property type="molecule type" value="Genomic_DNA"/>
</dbReference>
<dbReference type="RefSeq" id="WP_000828326.1">
    <property type="nucleotide sequence ID" value="NC_005823.1"/>
</dbReference>
<dbReference type="SMR" id="Q72VZ0"/>
<dbReference type="GeneID" id="61143508"/>
<dbReference type="KEGG" id="lic:LIC_10154"/>
<dbReference type="HOGENOM" id="CLU_129938_2_0_12"/>
<dbReference type="Proteomes" id="UP000007037">
    <property type="component" value="Chromosome I"/>
</dbReference>
<dbReference type="GO" id="GO:1990904">
    <property type="term" value="C:ribonucleoprotein complex"/>
    <property type="evidence" value="ECO:0007669"/>
    <property type="project" value="UniProtKB-KW"/>
</dbReference>
<dbReference type="GO" id="GO:0005840">
    <property type="term" value="C:ribosome"/>
    <property type="evidence" value="ECO:0007669"/>
    <property type="project" value="UniProtKB-KW"/>
</dbReference>
<dbReference type="GO" id="GO:0003735">
    <property type="term" value="F:structural constituent of ribosome"/>
    <property type="evidence" value="ECO:0007669"/>
    <property type="project" value="InterPro"/>
</dbReference>
<dbReference type="GO" id="GO:0006412">
    <property type="term" value="P:translation"/>
    <property type="evidence" value="ECO:0007669"/>
    <property type="project" value="UniProtKB-UniRule"/>
</dbReference>
<dbReference type="FunFam" id="1.10.287.3980:FF:000001">
    <property type="entry name" value="Mitochondrial ribosomal protein L34"/>
    <property type="match status" value="1"/>
</dbReference>
<dbReference type="Gene3D" id="1.10.287.3980">
    <property type="match status" value="1"/>
</dbReference>
<dbReference type="HAMAP" id="MF_00391">
    <property type="entry name" value="Ribosomal_bL34"/>
    <property type="match status" value="1"/>
</dbReference>
<dbReference type="InterPro" id="IPR000271">
    <property type="entry name" value="Ribosomal_bL34"/>
</dbReference>
<dbReference type="InterPro" id="IPR020939">
    <property type="entry name" value="Ribosomal_bL34_CS"/>
</dbReference>
<dbReference type="NCBIfam" id="TIGR01030">
    <property type="entry name" value="rpmH_bact"/>
    <property type="match status" value="1"/>
</dbReference>
<dbReference type="PANTHER" id="PTHR14503:SF4">
    <property type="entry name" value="LARGE RIBOSOMAL SUBUNIT PROTEIN BL34M"/>
    <property type="match status" value="1"/>
</dbReference>
<dbReference type="PANTHER" id="PTHR14503">
    <property type="entry name" value="MITOCHONDRIAL RIBOSOMAL PROTEIN 34 FAMILY MEMBER"/>
    <property type="match status" value="1"/>
</dbReference>
<dbReference type="Pfam" id="PF00468">
    <property type="entry name" value="Ribosomal_L34"/>
    <property type="match status" value="1"/>
</dbReference>
<dbReference type="PROSITE" id="PS00784">
    <property type="entry name" value="RIBOSOMAL_L34"/>
    <property type="match status" value="1"/>
</dbReference>
<reference key="1">
    <citation type="journal article" date="2004" name="J. Bacteriol.">
        <title>Comparative genomics of two Leptospira interrogans serovars reveals novel insights into physiology and pathogenesis.</title>
        <authorList>
            <person name="Nascimento A.L.T.O."/>
            <person name="Ko A.I."/>
            <person name="Martins E.A.L."/>
            <person name="Monteiro-Vitorello C.B."/>
            <person name="Ho P.L."/>
            <person name="Haake D.A."/>
            <person name="Verjovski-Almeida S."/>
            <person name="Hartskeerl R.A."/>
            <person name="Marques M.V."/>
            <person name="Oliveira M.C."/>
            <person name="Menck C.F.M."/>
            <person name="Leite L.C.C."/>
            <person name="Carrer H."/>
            <person name="Coutinho L.L."/>
            <person name="Degrave W.M."/>
            <person name="Dellagostin O.A."/>
            <person name="El-Dorry H."/>
            <person name="Ferro E.S."/>
            <person name="Ferro M.I.T."/>
            <person name="Furlan L.R."/>
            <person name="Gamberini M."/>
            <person name="Giglioti E.A."/>
            <person name="Goes-Neto A."/>
            <person name="Goldman G.H."/>
            <person name="Goldman M.H.S."/>
            <person name="Harakava R."/>
            <person name="Jeronimo S.M.B."/>
            <person name="Junqueira-de-Azevedo I.L.M."/>
            <person name="Kimura E.T."/>
            <person name="Kuramae E.E."/>
            <person name="Lemos E.G.M."/>
            <person name="Lemos M.V.F."/>
            <person name="Marino C.L."/>
            <person name="Nunes L.R."/>
            <person name="de Oliveira R.C."/>
            <person name="Pereira G.G."/>
            <person name="Reis M.S."/>
            <person name="Schriefer A."/>
            <person name="Siqueira W.J."/>
            <person name="Sommer P."/>
            <person name="Tsai S.M."/>
            <person name="Simpson A.J.G."/>
            <person name="Ferro J.A."/>
            <person name="Camargo L.E.A."/>
            <person name="Kitajima J.P."/>
            <person name="Setubal J.C."/>
            <person name="Van Sluys M.A."/>
        </authorList>
    </citation>
    <scope>NUCLEOTIDE SEQUENCE [LARGE SCALE GENOMIC DNA]</scope>
    <source>
        <strain>Fiocruz L1-130</strain>
    </source>
</reference>
<proteinExistence type="inferred from homology"/>
<accession>Q72VZ0</accession>
<sequence>MKRNYQPSRVKRARTHGFRARMATAGGRKVLSRRRKKGRYKLTVSDEKLGKKY</sequence>
<organism>
    <name type="scientific">Leptospira interrogans serogroup Icterohaemorrhagiae serovar copenhageni (strain Fiocruz L1-130)</name>
    <dbReference type="NCBI Taxonomy" id="267671"/>
    <lineage>
        <taxon>Bacteria</taxon>
        <taxon>Pseudomonadati</taxon>
        <taxon>Spirochaetota</taxon>
        <taxon>Spirochaetia</taxon>
        <taxon>Leptospirales</taxon>
        <taxon>Leptospiraceae</taxon>
        <taxon>Leptospira</taxon>
    </lineage>
</organism>
<feature type="chain" id="PRO_0000187401" description="Large ribosomal subunit protein bL34">
    <location>
        <begin position="1"/>
        <end position="53"/>
    </location>
</feature>
<feature type="region of interest" description="Disordered" evidence="2">
    <location>
        <begin position="23"/>
        <end position="53"/>
    </location>
</feature>
<feature type="compositionally biased region" description="Basic residues" evidence="2">
    <location>
        <begin position="30"/>
        <end position="40"/>
    </location>
</feature>
<feature type="compositionally biased region" description="Basic and acidic residues" evidence="2">
    <location>
        <begin position="44"/>
        <end position="53"/>
    </location>
</feature>
<gene>
    <name evidence="1" type="primary">rpmH</name>
    <name type="ordered locus">LIC_10154</name>
</gene>
<keyword id="KW-0687">Ribonucleoprotein</keyword>
<keyword id="KW-0689">Ribosomal protein</keyword>